<reference key="1">
    <citation type="journal article" date="2000" name="Science">
        <title>The genome sequence of Drosophila melanogaster.</title>
        <authorList>
            <person name="Adams M.D."/>
            <person name="Celniker S.E."/>
            <person name="Holt R.A."/>
            <person name="Evans C.A."/>
            <person name="Gocayne J.D."/>
            <person name="Amanatides P.G."/>
            <person name="Scherer S.E."/>
            <person name="Li P.W."/>
            <person name="Hoskins R.A."/>
            <person name="Galle R.F."/>
            <person name="George R.A."/>
            <person name="Lewis S.E."/>
            <person name="Richards S."/>
            <person name="Ashburner M."/>
            <person name="Henderson S.N."/>
            <person name="Sutton G.G."/>
            <person name="Wortman J.R."/>
            <person name="Yandell M.D."/>
            <person name="Zhang Q."/>
            <person name="Chen L.X."/>
            <person name="Brandon R.C."/>
            <person name="Rogers Y.-H.C."/>
            <person name="Blazej R.G."/>
            <person name="Champe M."/>
            <person name="Pfeiffer B.D."/>
            <person name="Wan K.H."/>
            <person name="Doyle C."/>
            <person name="Baxter E.G."/>
            <person name="Helt G."/>
            <person name="Nelson C.R."/>
            <person name="Miklos G.L.G."/>
            <person name="Abril J.F."/>
            <person name="Agbayani A."/>
            <person name="An H.-J."/>
            <person name="Andrews-Pfannkoch C."/>
            <person name="Baldwin D."/>
            <person name="Ballew R.M."/>
            <person name="Basu A."/>
            <person name="Baxendale J."/>
            <person name="Bayraktaroglu L."/>
            <person name="Beasley E.M."/>
            <person name="Beeson K.Y."/>
            <person name="Benos P.V."/>
            <person name="Berman B.P."/>
            <person name="Bhandari D."/>
            <person name="Bolshakov S."/>
            <person name="Borkova D."/>
            <person name="Botchan M.R."/>
            <person name="Bouck J."/>
            <person name="Brokstein P."/>
            <person name="Brottier P."/>
            <person name="Burtis K.C."/>
            <person name="Busam D.A."/>
            <person name="Butler H."/>
            <person name="Cadieu E."/>
            <person name="Center A."/>
            <person name="Chandra I."/>
            <person name="Cherry J.M."/>
            <person name="Cawley S."/>
            <person name="Dahlke C."/>
            <person name="Davenport L.B."/>
            <person name="Davies P."/>
            <person name="de Pablos B."/>
            <person name="Delcher A."/>
            <person name="Deng Z."/>
            <person name="Mays A.D."/>
            <person name="Dew I."/>
            <person name="Dietz S.M."/>
            <person name="Dodson K."/>
            <person name="Doup L.E."/>
            <person name="Downes M."/>
            <person name="Dugan-Rocha S."/>
            <person name="Dunkov B.C."/>
            <person name="Dunn P."/>
            <person name="Durbin K.J."/>
            <person name="Evangelista C.C."/>
            <person name="Ferraz C."/>
            <person name="Ferriera S."/>
            <person name="Fleischmann W."/>
            <person name="Fosler C."/>
            <person name="Gabrielian A.E."/>
            <person name="Garg N.S."/>
            <person name="Gelbart W.M."/>
            <person name="Glasser K."/>
            <person name="Glodek A."/>
            <person name="Gong F."/>
            <person name="Gorrell J.H."/>
            <person name="Gu Z."/>
            <person name="Guan P."/>
            <person name="Harris M."/>
            <person name="Harris N.L."/>
            <person name="Harvey D.A."/>
            <person name="Heiman T.J."/>
            <person name="Hernandez J.R."/>
            <person name="Houck J."/>
            <person name="Hostin D."/>
            <person name="Houston K.A."/>
            <person name="Howland T.J."/>
            <person name="Wei M.-H."/>
            <person name="Ibegwam C."/>
            <person name="Jalali M."/>
            <person name="Kalush F."/>
            <person name="Karpen G.H."/>
            <person name="Ke Z."/>
            <person name="Kennison J.A."/>
            <person name="Ketchum K.A."/>
            <person name="Kimmel B.E."/>
            <person name="Kodira C.D."/>
            <person name="Kraft C.L."/>
            <person name="Kravitz S."/>
            <person name="Kulp D."/>
            <person name="Lai Z."/>
            <person name="Lasko P."/>
            <person name="Lei Y."/>
            <person name="Levitsky A.A."/>
            <person name="Li J.H."/>
            <person name="Li Z."/>
            <person name="Liang Y."/>
            <person name="Lin X."/>
            <person name="Liu X."/>
            <person name="Mattei B."/>
            <person name="McIntosh T.C."/>
            <person name="McLeod M.P."/>
            <person name="McPherson D."/>
            <person name="Merkulov G."/>
            <person name="Milshina N.V."/>
            <person name="Mobarry C."/>
            <person name="Morris J."/>
            <person name="Moshrefi A."/>
            <person name="Mount S.M."/>
            <person name="Moy M."/>
            <person name="Murphy B."/>
            <person name="Murphy L."/>
            <person name="Muzny D.M."/>
            <person name="Nelson D.L."/>
            <person name="Nelson D.R."/>
            <person name="Nelson K.A."/>
            <person name="Nixon K."/>
            <person name="Nusskern D.R."/>
            <person name="Pacleb J.M."/>
            <person name="Palazzolo M."/>
            <person name="Pittman G.S."/>
            <person name="Pan S."/>
            <person name="Pollard J."/>
            <person name="Puri V."/>
            <person name="Reese M.G."/>
            <person name="Reinert K."/>
            <person name="Remington K."/>
            <person name="Saunders R.D.C."/>
            <person name="Scheeler F."/>
            <person name="Shen H."/>
            <person name="Shue B.C."/>
            <person name="Siden-Kiamos I."/>
            <person name="Simpson M."/>
            <person name="Skupski M.P."/>
            <person name="Smith T.J."/>
            <person name="Spier E."/>
            <person name="Spradling A.C."/>
            <person name="Stapleton M."/>
            <person name="Strong R."/>
            <person name="Sun E."/>
            <person name="Svirskas R."/>
            <person name="Tector C."/>
            <person name="Turner R."/>
            <person name="Venter E."/>
            <person name="Wang A.H."/>
            <person name="Wang X."/>
            <person name="Wang Z.-Y."/>
            <person name="Wassarman D.A."/>
            <person name="Weinstock G.M."/>
            <person name="Weissenbach J."/>
            <person name="Williams S.M."/>
            <person name="Woodage T."/>
            <person name="Worley K.C."/>
            <person name="Wu D."/>
            <person name="Yang S."/>
            <person name="Yao Q.A."/>
            <person name="Ye J."/>
            <person name="Yeh R.-F."/>
            <person name="Zaveri J.S."/>
            <person name="Zhan M."/>
            <person name="Zhang G."/>
            <person name="Zhao Q."/>
            <person name="Zheng L."/>
            <person name="Zheng X.H."/>
            <person name="Zhong F.N."/>
            <person name="Zhong W."/>
            <person name="Zhou X."/>
            <person name="Zhu S.C."/>
            <person name="Zhu X."/>
            <person name="Smith H.O."/>
            <person name="Gibbs R.A."/>
            <person name="Myers E.W."/>
            <person name="Rubin G.M."/>
            <person name="Venter J.C."/>
        </authorList>
    </citation>
    <scope>NUCLEOTIDE SEQUENCE [LARGE SCALE GENOMIC DNA]</scope>
    <source>
        <strain>Berkeley</strain>
    </source>
</reference>
<reference key="2">
    <citation type="journal article" date="2002" name="Genome Biol.">
        <title>Annotation of the Drosophila melanogaster euchromatic genome: a systematic review.</title>
        <authorList>
            <person name="Misra S."/>
            <person name="Crosby M.A."/>
            <person name="Mungall C.J."/>
            <person name="Matthews B.B."/>
            <person name="Campbell K.S."/>
            <person name="Hradecky P."/>
            <person name="Huang Y."/>
            <person name="Kaminker J.S."/>
            <person name="Millburn G.H."/>
            <person name="Prochnik S.E."/>
            <person name="Smith C.D."/>
            <person name="Tupy J.L."/>
            <person name="Whitfield E.J."/>
            <person name="Bayraktaroglu L."/>
            <person name="Berman B.P."/>
            <person name="Bettencourt B.R."/>
            <person name="Celniker S.E."/>
            <person name="de Grey A.D.N.J."/>
            <person name="Drysdale R.A."/>
            <person name="Harris N.L."/>
            <person name="Richter J."/>
            <person name="Russo S."/>
            <person name="Schroeder A.J."/>
            <person name="Shu S.Q."/>
            <person name="Stapleton M."/>
            <person name="Yamada C."/>
            <person name="Ashburner M."/>
            <person name="Gelbart W.M."/>
            <person name="Rubin G.M."/>
            <person name="Lewis S.E."/>
        </authorList>
    </citation>
    <scope>GENOME REANNOTATION</scope>
    <source>
        <strain>Berkeley</strain>
    </source>
</reference>
<reference key="3">
    <citation type="journal article" date="2001" name="Proc. Natl. Acad. Sci. U.S.A.">
        <title>Crystal structure of the ectodomain of Methuselah, a Drosophila G protein-coupled receptor associated with extended lifespan.</title>
        <authorList>
            <person name="West A.P. Jr."/>
            <person name="Llamas L.L."/>
            <person name="Snow P.M."/>
            <person name="Benzer S."/>
            <person name="Bjorkman P.J."/>
        </authorList>
    </citation>
    <scope>IDENTIFICATION</scope>
</reference>
<gene>
    <name type="primary">mthl12</name>
    <name type="synonym">Mth-like-12</name>
    <name type="ORF">CG32853</name>
</gene>
<sequence length="488" mass="56781">MFLWLKCFCTLIIVTIAKNSSAKIPHCKYDETINISHFKRLNDAYIYEHFEIPANLTGEFDYKELMDGSKVPTEFPNLRGCICKVRPCIRICCARKNILSNGECSDGVKNEIKLTMLDLTMQDILLTDPTLAELNMIPQYNSTELLILREQFQPCDEIVSLKRDEYTILKDGSILLHTSAEILSNDQYCLYPEIYSDFPETIRIINRRCYRNVMPGIAQLSVISVVGFILTLAVYLSVEKLRNLLGKCLICSLFSMFMEYFIWTMDYFRLLQSICSAAGYMKYFFSMSSYLWFSVVSFHLWELFTSLNRHEPQYRFLIYNTFVWCTAAIPTVVIFSMNQMWENDPGKSEWLPLVGYFGCSVKDWNSSSWFYSHIPIVILNSFNVIMFVLTAIYIWKVKKGVKSFAQHDERNTTCLEFNVQTYIQFVRLFLIMGASWLLDQLTRLAEDSHLLLDTIVLNLTVYLNAAFGILIFVLLILKGSTFKMIMER</sequence>
<proteinExistence type="inferred from homology"/>
<name>MTH12_DROME</name>
<feature type="signal peptide" evidence="2">
    <location>
        <begin position="1"/>
        <end position="17"/>
    </location>
</feature>
<feature type="chain" id="PRO_0000013035" description="Probable G-protein coupled receptor Mth-like 12">
    <location>
        <begin position="18"/>
        <end position="488"/>
    </location>
</feature>
<feature type="topological domain" description="Extracellular" evidence="2">
    <location>
        <begin position="18"/>
        <end position="215"/>
    </location>
</feature>
<feature type="transmembrane region" description="Helical; Name=1" evidence="2">
    <location>
        <begin position="216"/>
        <end position="236"/>
    </location>
</feature>
<feature type="topological domain" description="Cytoplasmic" evidence="2">
    <location>
        <begin position="237"/>
        <end position="247"/>
    </location>
</feature>
<feature type="transmembrane region" description="Helical; Name=2" evidence="2">
    <location>
        <begin position="248"/>
        <end position="268"/>
    </location>
</feature>
<feature type="topological domain" description="Extracellular" evidence="2">
    <location>
        <begin position="269"/>
        <end position="283"/>
    </location>
</feature>
<feature type="transmembrane region" description="Helical; Name=3" evidence="2">
    <location>
        <begin position="284"/>
        <end position="304"/>
    </location>
</feature>
<feature type="topological domain" description="Cytoplasmic" evidence="2">
    <location>
        <begin position="305"/>
        <end position="315"/>
    </location>
</feature>
<feature type="transmembrane region" description="Helical; Name=4" evidence="2">
    <location>
        <begin position="316"/>
        <end position="336"/>
    </location>
</feature>
<feature type="topological domain" description="Extracellular" evidence="2">
    <location>
        <begin position="337"/>
        <end position="373"/>
    </location>
</feature>
<feature type="transmembrane region" description="Helical; Name=5" evidence="2">
    <location>
        <begin position="374"/>
        <end position="394"/>
    </location>
</feature>
<feature type="topological domain" description="Cytoplasmic" evidence="2">
    <location>
        <begin position="395"/>
        <end position="416"/>
    </location>
</feature>
<feature type="transmembrane region" description="Helical; Name=6" evidence="2">
    <location>
        <begin position="417"/>
        <end position="437"/>
    </location>
</feature>
<feature type="topological domain" description="Extracellular" evidence="2">
    <location>
        <begin position="438"/>
        <end position="454"/>
    </location>
</feature>
<feature type="transmembrane region" description="Helical; Name=7" evidence="2">
    <location>
        <begin position="455"/>
        <end position="475"/>
    </location>
</feature>
<feature type="topological domain" description="Cytoplasmic" evidence="2">
    <location>
        <begin position="476"/>
        <end position="488"/>
    </location>
</feature>
<feature type="glycosylation site" description="N-linked (GlcNAc...) asparagine" evidence="2">
    <location>
        <position position="19"/>
    </location>
</feature>
<feature type="glycosylation site" description="N-linked (GlcNAc...) asparagine" evidence="2">
    <location>
        <position position="34"/>
    </location>
</feature>
<feature type="glycosylation site" description="N-linked (GlcNAc...) asparagine" evidence="2">
    <location>
        <position position="55"/>
    </location>
</feature>
<feature type="glycosylation site" description="N-linked (GlcNAc...) asparagine" evidence="2">
    <location>
        <position position="141"/>
    </location>
</feature>
<feature type="glycosylation site" description="N-linked (GlcNAc...) asparagine" evidence="2">
    <location>
        <position position="365"/>
    </location>
</feature>
<feature type="disulfide bond" evidence="1">
    <location>
        <begin position="27"/>
        <end position="81"/>
    </location>
</feature>
<feature type="disulfide bond" evidence="1">
    <location>
        <begin position="83"/>
        <end position="88"/>
    </location>
</feature>
<feature type="disulfide bond" evidence="1">
    <location>
        <begin position="92"/>
        <end position="189"/>
    </location>
</feature>
<feature type="disulfide bond" evidence="1">
    <location>
        <begin position="93"/>
        <end position="104"/>
    </location>
</feature>
<feature type="disulfide bond" evidence="1">
    <location>
        <begin position="155"/>
        <end position="209"/>
    </location>
</feature>
<protein>
    <recommendedName>
        <fullName>Probable G-protein coupled receptor Mth-like 12</fullName>
    </recommendedName>
    <alternativeName>
        <fullName>Protein methuselah-like 12</fullName>
    </alternativeName>
</protein>
<comment type="subcellular location">
    <subcellularLocation>
        <location evidence="3">Cell membrane</location>
        <topology evidence="3">Multi-pass membrane protein</topology>
    </subcellularLocation>
</comment>
<comment type="similarity">
    <text evidence="3">Belongs to the G-protein coupled receptor 2 family. Mth subfamily.</text>
</comment>
<dbReference type="EMBL" id="AE014297">
    <property type="protein sequence ID" value="AAN13556.2"/>
    <property type="molecule type" value="Genomic_DNA"/>
</dbReference>
<dbReference type="RefSeq" id="NP_731791.2">
    <property type="nucleotide sequence ID" value="NM_169508.2"/>
</dbReference>
<dbReference type="FunCoup" id="P83119">
    <property type="interactions" value="10"/>
</dbReference>
<dbReference type="STRING" id="7227.FBpp0082214"/>
<dbReference type="GlyCosmos" id="P83119">
    <property type="glycosylation" value="5 sites, No reported glycans"/>
</dbReference>
<dbReference type="GlyGen" id="P83119">
    <property type="glycosylation" value="5 sites"/>
</dbReference>
<dbReference type="PaxDb" id="7227-FBpp0082214"/>
<dbReference type="EnsemblMetazoa" id="FBtr0082746">
    <property type="protein sequence ID" value="FBpp0082214"/>
    <property type="gene ID" value="FBgn0045442"/>
</dbReference>
<dbReference type="GeneID" id="261599"/>
<dbReference type="KEGG" id="dme:Dmel_CG32853"/>
<dbReference type="AGR" id="FB:FBgn0045442"/>
<dbReference type="CTD" id="261599"/>
<dbReference type="FlyBase" id="FBgn0045442">
    <property type="gene designation" value="mthl12"/>
</dbReference>
<dbReference type="VEuPathDB" id="VectorBase:FBgn0045442"/>
<dbReference type="eggNOG" id="KOG4193">
    <property type="taxonomic scope" value="Eukaryota"/>
</dbReference>
<dbReference type="GeneTree" id="ENSGT00940000166745"/>
<dbReference type="HOGENOM" id="CLU_002753_3_0_1"/>
<dbReference type="InParanoid" id="P83119"/>
<dbReference type="OMA" id="FMEYFIW"/>
<dbReference type="OrthoDB" id="6134459at2759"/>
<dbReference type="PhylomeDB" id="P83119"/>
<dbReference type="BioGRID-ORCS" id="261599">
    <property type="hits" value="0 hits in 1 CRISPR screen"/>
</dbReference>
<dbReference type="GenomeRNAi" id="261599"/>
<dbReference type="PRO" id="PR:P83119"/>
<dbReference type="Proteomes" id="UP000000803">
    <property type="component" value="Chromosome 3R"/>
</dbReference>
<dbReference type="GO" id="GO:0016020">
    <property type="term" value="C:membrane"/>
    <property type="evidence" value="ECO:0000250"/>
    <property type="project" value="FlyBase"/>
</dbReference>
<dbReference type="GO" id="GO:0005886">
    <property type="term" value="C:plasma membrane"/>
    <property type="evidence" value="ECO:0000318"/>
    <property type="project" value="GO_Central"/>
</dbReference>
<dbReference type="GO" id="GO:0008528">
    <property type="term" value="F:G protein-coupled peptide receptor activity"/>
    <property type="evidence" value="ECO:0000318"/>
    <property type="project" value="GO_Central"/>
</dbReference>
<dbReference type="GO" id="GO:0004930">
    <property type="term" value="F:G protein-coupled receptor activity"/>
    <property type="evidence" value="ECO:0000250"/>
    <property type="project" value="FlyBase"/>
</dbReference>
<dbReference type="GO" id="GO:0007166">
    <property type="term" value="P:cell surface receptor signaling pathway"/>
    <property type="evidence" value="ECO:0007669"/>
    <property type="project" value="InterPro"/>
</dbReference>
<dbReference type="GO" id="GO:0008340">
    <property type="term" value="P:determination of adult lifespan"/>
    <property type="evidence" value="ECO:0000250"/>
    <property type="project" value="UniProtKB"/>
</dbReference>
<dbReference type="GO" id="GO:0007186">
    <property type="term" value="P:G protein-coupled receptor signaling pathway"/>
    <property type="evidence" value="ECO:0000250"/>
    <property type="project" value="FlyBase"/>
</dbReference>
<dbReference type="GO" id="GO:0042594">
    <property type="term" value="P:response to starvation"/>
    <property type="evidence" value="ECO:0000250"/>
    <property type="project" value="UniProtKB"/>
</dbReference>
<dbReference type="CDD" id="cd15039">
    <property type="entry name" value="7tmB3_Methuselah-like"/>
    <property type="match status" value="1"/>
</dbReference>
<dbReference type="FunFam" id="1.20.1070.10:FF:000297">
    <property type="entry name" value="G-protein coupled receptor Mth"/>
    <property type="match status" value="1"/>
</dbReference>
<dbReference type="FunFam" id="2.170.180.11:FF:000001">
    <property type="entry name" value="G-protein coupled receptor Mth"/>
    <property type="match status" value="1"/>
</dbReference>
<dbReference type="Gene3D" id="2.30.160.11">
    <property type="match status" value="1"/>
</dbReference>
<dbReference type="Gene3D" id="2.170.180.11">
    <property type="entry name" value="Methuselah ectodomain, domain 2"/>
    <property type="match status" value="1"/>
</dbReference>
<dbReference type="Gene3D" id="1.20.1070.10">
    <property type="entry name" value="Rhodopsin 7-helix transmembrane proteins"/>
    <property type="match status" value="1"/>
</dbReference>
<dbReference type="InterPro" id="IPR022343">
    <property type="entry name" value="GCR1-cAMP_receptor"/>
</dbReference>
<dbReference type="InterPro" id="IPR017981">
    <property type="entry name" value="GPCR_2-like_7TM"/>
</dbReference>
<dbReference type="InterPro" id="IPR044860">
    <property type="entry name" value="Methusela_ecto_dom_1"/>
</dbReference>
<dbReference type="InterPro" id="IPR023311">
    <property type="entry name" value="Methusela_ecto_dom_2"/>
</dbReference>
<dbReference type="InterPro" id="IPR010596">
    <property type="entry name" value="Methuselah_N_dom"/>
</dbReference>
<dbReference type="InterPro" id="IPR036272">
    <property type="entry name" value="Methuselah_N_sf"/>
</dbReference>
<dbReference type="InterPro" id="IPR051384">
    <property type="entry name" value="Mth_GPCR"/>
</dbReference>
<dbReference type="PANTHER" id="PTHR47154">
    <property type="entry name" value="G-PROTEIN COUPLED RECEPTOR MTH-RELATED"/>
    <property type="match status" value="1"/>
</dbReference>
<dbReference type="PANTHER" id="PTHR47154:SF2">
    <property type="entry name" value="G-PROTEIN COUPLED RECEPTOR MTH-RELATED"/>
    <property type="match status" value="1"/>
</dbReference>
<dbReference type="Pfam" id="PF06652">
    <property type="entry name" value="Methuselah_N"/>
    <property type="match status" value="1"/>
</dbReference>
<dbReference type="PRINTS" id="PR02001">
    <property type="entry name" value="GCR1CAMPR"/>
</dbReference>
<dbReference type="SUPFAM" id="SSF63877">
    <property type="entry name" value="Methuselah ectodomain"/>
    <property type="match status" value="1"/>
</dbReference>
<dbReference type="PROSITE" id="PS50261">
    <property type="entry name" value="G_PROTEIN_RECEP_F2_4"/>
    <property type="match status" value="1"/>
</dbReference>
<organism>
    <name type="scientific">Drosophila melanogaster</name>
    <name type="common">Fruit fly</name>
    <dbReference type="NCBI Taxonomy" id="7227"/>
    <lineage>
        <taxon>Eukaryota</taxon>
        <taxon>Metazoa</taxon>
        <taxon>Ecdysozoa</taxon>
        <taxon>Arthropoda</taxon>
        <taxon>Hexapoda</taxon>
        <taxon>Insecta</taxon>
        <taxon>Pterygota</taxon>
        <taxon>Neoptera</taxon>
        <taxon>Endopterygota</taxon>
        <taxon>Diptera</taxon>
        <taxon>Brachycera</taxon>
        <taxon>Muscomorpha</taxon>
        <taxon>Ephydroidea</taxon>
        <taxon>Drosophilidae</taxon>
        <taxon>Drosophila</taxon>
        <taxon>Sophophora</taxon>
    </lineage>
</organism>
<evidence type="ECO:0000250" key="1">
    <source>
        <dbReference type="UniProtKB" id="O97148"/>
    </source>
</evidence>
<evidence type="ECO:0000255" key="2"/>
<evidence type="ECO:0000305" key="3"/>
<keyword id="KW-1003">Cell membrane</keyword>
<keyword id="KW-1015">Disulfide bond</keyword>
<keyword id="KW-0297">G-protein coupled receptor</keyword>
<keyword id="KW-0325">Glycoprotein</keyword>
<keyword id="KW-0472">Membrane</keyword>
<keyword id="KW-0675">Receptor</keyword>
<keyword id="KW-1185">Reference proteome</keyword>
<keyword id="KW-0732">Signal</keyword>
<keyword id="KW-0807">Transducer</keyword>
<keyword id="KW-0812">Transmembrane</keyword>
<keyword id="KW-1133">Transmembrane helix</keyword>
<accession>P83119</accession>
<accession>Q8INH4</accession>